<geneLocation type="plasmid">
    <name>sym pNGR234a</name>
</geneLocation>
<comment type="similarity">
    <text evidence="1">Belongs to the UPF0460 family.</text>
</comment>
<proteinExistence type="inferred from homology"/>
<evidence type="ECO:0000305" key="1"/>
<keyword id="KW-0535">Nitrogen fixation</keyword>
<keyword id="KW-0614">Plasmid</keyword>
<keyword id="KW-1185">Reference proteome</keyword>
<feature type="chain" id="PRO_0000200953" description="UPF0460 protein y4vQ">
    <location>
        <begin position="1"/>
        <end position="162"/>
    </location>
</feature>
<protein>
    <recommendedName>
        <fullName>UPF0460 protein y4vQ</fullName>
    </recommendedName>
</protein>
<accession>P55676</accession>
<name>Y4VQ_SINFN</name>
<organism>
    <name type="scientific">Sinorhizobium fredii (strain NBRC 101917 / NGR234)</name>
    <dbReference type="NCBI Taxonomy" id="394"/>
    <lineage>
        <taxon>Bacteria</taxon>
        <taxon>Pseudomonadati</taxon>
        <taxon>Pseudomonadota</taxon>
        <taxon>Alphaproteobacteria</taxon>
        <taxon>Hyphomicrobiales</taxon>
        <taxon>Rhizobiaceae</taxon>
        <taxon>Sinorhizobium/Ensifer group</taxon>
        <taxon>Sinorhizobium</taxon>
    </lineage>
</organism>
<gene>
    <name type="ordered locus">NGR_a01070</name>
    <name type="ORF">y4vQ</name>
</gene>
<reference key="1">
    <citation type="journal article" date="1997" name="Nature">
        <title>Molecular basis of symbiosis between Rhizobium and legumes.</title>
        <authorList>
            <person name="Freiberg C.A."/>
            <person name="Fellay R."/>
            <person name="Bairoch A."/>
            <person name="Broughton W.J."/>
            <person name="Rosenthal A."/>
            <person name="Perret X."/>
        </authorList>
    </citation>
    <scope>NUCLEOTIDE SEQUENCE [LARGE SCALE GENOMIC DNA]</scope>
    <source>
        <strain>NBRC 101917 / NGR234</strain>
    </source>
</reference>
<reference key="2">
    <citation type="journal article" date="2009" name="Appl. Environ. Microbiol.">
        <title>Rhizobium sp. strain NGR234 possesses a remarkable number of secretion systems.</title>
        <authorList>
            <person name="Schmeisser C."/>
            <person name="Liesegang H."/>
            <person name="Krysciak D."/>
            <person name="Bakkou N."/>
            <person name="Le Quere A."/>
            <person name="Wollherr A."/>
            <person name="Heinemeyer I."/>
            <person name="Morgenstern B."/>
            <person name="Pommerening-Roeser A."/>
            <person name="Flores M."/>
            <person name="Palacios R."/>
            <person name="Brenner S."/>
            <person name="Gottschalk G."/>
            <person name="Schmitz R.A."/>
            <person name="Broughton W.J."/>
            <person name="Perret X."/>
            <person name="Strittmatter A.W."/>
            <person name="Streit W.R."/>
        </authorList>
    </citation>
    <scope>NUCLEOTIDE SEQUENCE [LARGE SCALE GENOMIC DNA]</scope>
    <source>
        <strain>NBRC 101917 / NGR234</strain>
    </source>
</reference>
<sequence length="162" mass="17703">MKKTSINTGTPDVKVDEAALVTPFVKCLARLVRAQDTYGSQDRASDAELLAHFIITEEQRREIPIIGDPGPDVMLRFNIFYTAVALSIEARTGLVASPITMISHEGFGRVLLTTGRLVVFSKTVRDIHRFGFATLRKLAEAGAKLVDDATAAIETYPEVARA</sequence>
<dbReference type="EMBL" id="U00090">
    <property type="protein sequence ID" value="AAB91905.1"/>
    <property type="molecule type" value="Genomic_DNA"/>
</dbReference>
<dbReference type="RefSeq" id="NP_444118.1">
    <property type="nucleotide sequence ID" value="NC_000914.2"/>
</dbReference>
<dbReference type="RefSeq" id="WP_010875148.1">
    <property type="nucleotide sequence ID" value="NC_000914.2"/>
</dbReference>
<dbReference type="SMR" id="P55676"/>
<dbReference type="KEGG" id="rhi:NGR_a01070"/>
<dbReference type="PATRIC" id="fig|394.7.peg.91"/>
<dbReference type="eggNOG" id="ENOG502ZBN7">
    <property type="taxonomic scope" value="Bacteria"/>
</dbReference>
<dbReference type="HOGENOM" id="CLU_141510_0_0_5"/>
<dbReference type="OrthoDB" id="9808545at2"/>
<dbReference type="Proteomes" id="UP000001054">
    <property type="component" value="Plasmid pNGR234a"/>
</dbReference>
<dbReference type="GO" id="GO:0009399">
    <property type="term" value="P:nitrogen fixation"/>
    <property type="evidence" value="ECO:0007669"/>
    <property type="project" value="UniProtKB-KW"/>
</dbReference>
<dbReference type="Gene3D" id="1.10.3100.20">
    <property type="entry name" value="Protein of unknown function DUF269"/>
    <property type="match status" value="1"/>
</dbReference>
<dbReference type="InterPro" id="IPR004952">
    <property type="entry name" value="NifX-assoc_nitrogen_fix"/>
</dbReference>
<dbReference type="NCBIfam" id="TIGR02935">
    <property type="entry name" value="NifX-associated nitrogen fixation protein"/>
    <property type="match status" value="1"/>
</dbReference>
<dbReference type="Pfam" id="PF03270">
    <property type="entry name" value="DUF269"/>
    <property type="match status" value="1"/>
</dbReference>
<dbReference type="PIRSF" id="PIRSF005788">
    <property type="entry name" value="NifK"/>
    <property type="match status" value="1"/>
</dbReference>